<gene>
    <name type="primary">DLX4</name>
    <name type="synonym">BP1</name>
    <name type="synonym">DLX7</name>
    <name type="synonym">DLX8</name>
    <name type="synonym">DLX9</name>
</gene>
<comment type="function">
    <text evidence="4 5">May play a role in determining the production of hemoglobin S. May act as a repressor. During embryonic development, plays a role in palatogenesis.</text>
</comment>
<comment type="interaction">
    <interactant intactId="EBI-1752755">
        <id>Q92988</id>
    </interactant>
    <interactant intactId="EBI-389883">
        <id>P16333</id>
        <label>NCK1</label>
    </interactant>
    <organismsDiffer>false</organismsDiffer>
    <experiments>3</experiments>
</comment>
<comment type="interaction">
    <interactant intactId="EBI-1752755">
        <id>Q92988</id>
    </interactant>
    <interactant intactId="EBI-347263">
        <id>Q13485</id>
        <label>SMAD4</label>
    </interactant>
    <organismsDiffer>false</organismsDiffer>
    <experiments>5</experiments>
</comment>
<comment type="interaction">
    <interactant intactId="EBI-1752755">
        <id>Q92988</id>
    </interactant>
    <interactant intactId="EBI-298336">
        <id>P08047</id>
        <label>SP1</label>
    </interactant>
    <organismsDiffer>false</organismsDiffer>
    <experiments>4</experiments>
</comment>
<comment type="subcellular location">
    <subcellularLocation>
        <location evidence="5">Nucleus</location>
    </subcellularLocation>
</comment>
<comment type="alternative products">
    <event type="alternative splicing"/>
    <isoform>
        <id>Q92988-1</id>
        <name>1</name>
        <sequence type="displayed"/>
    </isoform>
    <isoform>
        <id>Q92988-2</id>
        <name>2</name>
        <sequence type="described" ref="VSP_002236"/>
    </isoform>
    <isoform>
        <id>Q92988-3</id>
        <name>3</name>
        <sequence type="described" ref="VSP_002236 VSP_017043"/>
    </isoform>
    <text>Additional isoforms seem to exist. PubMed:9073066 (AAC51171) sequence may be an additional isoform.</text>
</comment>
<comment type="tissue specificity">
    <text evidence="3 4">Expressed in leukemia cells and placenta. Also expressed in kidney and fetal liver.</text>
</comment>
<comment type="disease" evidence="5">
    <disease id="DI-04616">
        <name>Non-syndromic orofacial cleft 15</name>
        <acronym>OFC15</acronym>
        <description>A birth defect consisting of cleft lips with or without cleft palate. Cleft lips are associated with cleft palate in two-third of cases. A cleft lip can occur on one or both sides and range in severity from a simple notch in the upper lip to a complete opening in the lip extending into the floor of the nostril and involving the upper gum. OFC15 inheritance is autosomal dominant.</description>
        <dbReference type="MIM" id="616788"/>
    </disease>
    <text>The disease is caused by variants affecting the gene represented in this entry.</text>
</comment>
<comment type="similarity">
    <text evidence="8">Belongs to the distal-less homeobox family.</text>
</comment>
<comment type="online information" name="Atlas of Genetics and Cytogenetics in Oncology and Haematology">
    <link uri="https://atlasgeneticsoncology.org/gene/49827/DLX4"/>
</comment>
<name>DLX4_HUMAN</name>
<reference key="1">
    <citation type="journal article" date="1996" name="Genomics">
        <title>Genomic analysis of a new mammalian distal-less gene: Dlx7.</title>
        <authorList>
            <person name="Nakamura S."/>
            <person name="Stock D.W."/>
            <person name="Wydner K.L."/>
            <person name="Bollekens J.A."/>
            <person name="Takeshita K."/>
            <person name="Nagai B.M."/>
            <person name="Chiba S."/>
            <person name="Kitamura T."/>
            <person name="Freeland T.M."/>
            <person name="Zhao Z."/>
            <person name="Minowada J."/>
            <person name="Lawrence J.B."/>
            <person name="Weiss K.M."/>
            <person name="Ruddle F.H."/>
        </authorList>
    </citation>
    <scope>NUCLEOTIDE SEQUENCE [MRNA] (ISOFORM 2)</scope>
    <source>
        <tissue>Leukemia</tissue>
    </source>
</reference>
<reference key="2">
    <citation type="journal article" date="1998" name="Hum. Mol. Genet.">
        <title>Identification of a mutation in DLX3 associated with tricho-dento-osseous (TDO) syndrome.</title>
        <authorList>
            <person name="Price J.A."/>
            <person name="Bowden D.W."/>
            <person name="Wright J.T."/>
            <person name="Pettenati M.J."/>
            <person name="Hart T.C."/>
        </authorList>
    </citation>
    <scope>NUCLEOTIDE SEQUENCE [GENOMIC DNA]</scope>
</reference>
<reference key="3">
    <citation type="journal article" date="2000" name="Leukemia">
        <title>BP1, a new homeobox gene, is frequently expressed in acute leukemias.</title>
        <authorList>
            <person name="Haga S.B."/>
            <person name="Fu S."/>
            <person name="Karp J.E."/>
            <person name="Ross D.D."/>
            <person name="Williams D.M."/>
            <person name="Hankins W.D."/>
            <person name="Behm F."/>
            <person name="Ruscetti F.W."/>
            <person name="Chang M."/>
            <person name="Smith B.D."/>
            <person name="Becton D."/>
            <person name="Raimondi S.C."/>
            <person name="Berg P.E."/>
        </authorList>
    </citation>
    <scope>NUCLEOTIDE SEQUENCE [MRNA] (ISOFORM 1)</scope>
    <scope>TISSUE SPECIFICITY</scope>
</reference>
<reference key="4">
    <citation type="journal article" date="2002" name="Mol. Cell. Biol.">
        <title>BP1, a homeodomain-containing isoform of DLX4, represses the beta-globin gene.</title>
        <authorList>
            <person name="Chase M.B."/>
            <person name="Fu S."/>
            <person name="Haga S.B."/>
            <person name="Davenport G."/>
            <person name="Stevenson H."/>
            <person name="Do K."/>
            <person name="Morgan D."/>
            <person name="Mah A.L."/>
            <person name="Berg P.E."/>
        </authorList>
    </citation>
    <scope>NUCLEOTIDE SEQUENCE [MRNA] (ISOFORM 1)</scope>
    <scope>TISSUE SPECIFICITY</scope>
    <scope>FUNCTION</scope>
</reference>
<reference key="5">
    <citation type="journal article" date="2002" name="Proc. Natl. Acad. Sci. U.S.A.">
        <title>Genomic structure and functional control of the Dlx3-7 bigene cluster.</title>
        <authorList>
            <person name="Sumiyama K."/>
            <person name="Irvine S.Q."/>
            <person name="Stock D.W."/>
            <person name="Weiss K.M."/>
            <person name="Kawasaki K."/>
            <person name="Shimizu N."/>
            <person name="Shashikant C.S."/>
            <person name="Miller W."/>
            <person name="Ruddle F.H."/>
        </authorList>
    </citation>
    <scope>NUCLEOTIDE SEQUENCE [GENOMIC DNA]</scope>
    <source>
        <tissue>Foreskin</tissue>
    </source>
</reference>
<reference key="6">
    <citation type="submission" date="2003-05" db="EMBL/GenBank/DDBJ databases">
        <title>Cloning of human full-length CDSs in BD Creator(TM) system donor vector.</title>
        <authorList>
            <person name="Kalnine N."/>
            <person name="Chen X."/>
            <person name="Rolfs A."/>
            <person name="Halleck A."/>
            <person name="Hines L."/>
            <person name="Eisenstein S."/>
            <person name="Koundinya M."/>
            <person name="Raphael J."/>
            <person name="Moreira D."/>
            <person name="Kelley T."/>
            <person name="LaBaer J."/>
            <person name="Lin Y."/>
            <person name="Phelan M."/>
            <person name="Farmer A."/>
        </authorList>
    </citation>
    <scope>NUCLEOTIDE SEQUENCE [LARGE SCALE MRNA] (ISOFORM 1)</scope>
</reference>
<reference key="7">
    <citation type="submission" date="2005-09" db="EMBL/GenBank/DDBJ databases">
        <authorList>
            <person name="Mural R.J."/>
            <person name="Istrail S."/>
            <person name="Sutton G.G."/>
            <person name="Florea L."/>
            <person name="Halpern A.L."/>
            <person name="Mobarry C.M."/>
            <person name="Lippert R."/>
            <person name="Walenz B."/>
            <person name="Shatkay H."/>
            <person name="Dew I."/>
            <person name="Miller J.R."/>
            <person name="Flanigan M.J."/>
            <person name="Edwards N.J."/>
            <person name="Bolanos R."/>
            <person name="Fasulo D."/>
            <person name="Halldorsson B.V."/>
            <person name="Hannenhalli S."/>
            <person name="Turner R."/>
            <person name="Yooseph S."/>
            <person name="Lu F."/>
            <person name="Nusskern D.R."/>
            <person name="Shue B.C."/>
            <person name="Zheng X.H."/>
            <person name="Zhong F."/>
            <person name="Delcher A.L."/>
            <person name="Huson D.H."/>
            <person name="Kravitz S.A."/>
            <person name="Mouchard L."/>
            <person name="Reinert K."/>
            <person name="Remington K.A."/>
            <person name="Clark A.G."/>
            <person name="Waterman M.S."/>
            <person name="Eichler E.E."/>
            <person name="Adams M.D."/>
            <person name="Hunkapiller M.W."/>
            <person name="Myers E.W."/>
            <person name="Venter J.C."/>
        </authorList>
    </citation>
    <scope>NUCLEOTIDE SEQUENCE [LARGE SCALE GENOMIC DNA]</scope>
</reference>
<reference key="8">
    <citation type="journal article" date="2004" name="Genome Res.">
        <title>The status, quality, and expansion of the NIH full-length cDNA project: the Mammalian Gene Collection (MGC).</title>
        <authorList>
            <consortium name="The MGC Project Team"/>
        </authorList>
    </citation>
    <scope>NUCLEOTIDE SEQUENCE [LARGE SCALE MRNA] (ISOFORMS 1 AND 3)</scope>
    <source>
        <tissue>Placenta</tissue>
        <tissue>Uterus</tissue>
    </source>
</reference>
<reference key="9">
    <citation type="journal article" date="1997" name="Gene">
        <title>Isolation and identification of homeobox genes from the human placenta including a novel member of the Distal-less family, DLX4.</title>
        <authorList>
            <person name="Quinn L.M."/>
            <person name="Johnson B.V."/>
            <person name="Nicholl J."/>
            <person name="Sutherland G.R."/>
            <person name="Kalionis B."/>
        </authorList>
    </citation>
    <scope>NUCLEOTIDE SEQUENCE [MRNA] OF 1-177</scope>
    <source>
        <tissue>Placenta</tissue>
    </source>
</reference>
<reference key="10">
    <citation type="journal article" date="2015" name="Hum. Mol. Genet.">
        <title>DLX4 is associated with orofacial clefting and abnormal jaw development.</title>
        <authorList>
            <person name="Wu D."/>
            <person name="Mandal S."/>
            <person name="Choi A."/>
            <person name="Anderson A."/>
            <person name="Prochazkova M."/>
            <person name="Perry H."/>
            <person name="Gil-Da-Silva-Lopes V.L."/>
            <person name="Lao R."/>
            <person name="Wan E."/>
            <person name="Tang P.L."/>
            <person name="Kwok P.Y."/>
            <person name="Klein O."/>
            <person name="Zhuan B."/>
            <person name="Slavotinek A.M."/>
        </authorList>
    </citation>
    <scope>INVOLVEMENT IN OFC15</scope>
    <scope>FUNCTION</scope>
    <scope>SUBCELLULAR LOCATION</scope>
</reference>
<organism>
    <name type="scientific">Homo sapiens</name>
    <name type="common">Human</name>
    <dbReference type="NCBI Taxonomy" id="9606"/>
    <lineage>
        <taxon>Eukaryota</taxon>
        <taxon>Metazoa</taxon>
        <taxon>Chordata</taxon>
        <taxon>Craniata</taxon>
        <taxon>Vertebrata</taxon>
        <taxon>Euteleostomi</taxon>
        <taxon>Mammalia</taxon>
        <taxon>Eutheria</taxon>
        <taxon>Euarchontoglires</taxon>
        <taxon>Primates</taxon>
        <taxon>Haplorrhini</taxon>
        <taxon>Catarrhini</taxon>
        <taxon>Hominidae</taxon>
        <taxon>Homo</taxon>
    </lineage>
</organism>
<sequence length="240" mass="26263">MTSLPCPLPGRDASKAVFPDLAPVPSVAAAYPLGLSPTTAASPNLSYSRPYGHLLSYPYTEPANPGDSYLSCQQPAALSQPLCGPAEHPQELEADSEKPRLSPEPSERRPQAPAKKLRKPRTIYSSLQLQHLNQRFQHTQYLALPERAQLAAQLGLTQTQVKIWFQNKRSKYKKLLKQNSGGQEGDFPGRTFSVSPCSPPLPSLWDLPKAGTLPTSGYGNSFGAWYQHHSSDVLASPQMM</sequence>
<proteinExistence type="evidence at protein level"/>
<accession>Q92988</accession>
<accession>D3DTX2</accession>
<accession>D3DTX3</accession>
<accession>O60480</accession>
<accession>Q13265</accession>
<accession>Q6PJK0</accession>
<accession>Q9HBE0</accession>
<feature type="chain" id="PRO_0000049028" description="Homeobox protein DLX-4">
    <location>
        <begin position="1"/>
        <end position="240"/>
    </location>
</feature>
<feature type="DNA-binding region" description="Homeobox" evidence="1">
    <location>
        <begin position="117"/>
        <end position="176"/>
    </location>
</feature>
<feature type="region of interest" description="Disordered" evidence="2">
    <location>
        <begin position="80"/>
        <end position="120"/>
    </location>
</feature>
<feature type="compositionally biased region" description="Basic and acidic residues" evidence="2">
    <location>
        <begin position="88"/>
        <end position="110"/>
    </location>
</feature>
<feature type="splice variant" id="VSP_002236" description="In isoform 2 and isoform 3." evidence="6 7">
    <original>MTSLPCPLPGRDASKAVFPDLAPVPSVAAAYPLGLSPTTAASPNLSYSRPYGHLLSYPYTEPANPGDSYLSCQQPAALSQPLCGPAEHPQELEA</original>
    <variation>MKLSVLPPRSLLAPYTVLCCPP</variation>
    <location>
        <begin position="1"/>
        <end position="94"/>
    </location>
</feature>
<feature type="splice variant" id="VSP_017043" description="In isoform 3." evidence="6">
    <original>KIWFQNKRSKYKKLLKQNSGGQEGDFPGRTFSVSPCSPPLPSLWDLPKAGTLPTSGYGNSFGAWYQHHSSDVLASPQMM</original>
    <variation>GPVSSFPISHLPWFSGNSSPSPSCE</variation>
    <location>
        <begin position="162"/>
        <end position="240"/>
    </location>
</feature>
<feature type="sequence conflict" description="In Ref. 9." evidence="8" ref="9">
    <original>MTSLPCPLPGRDASKAVFPDLAPVPSVAAAYPLGLSPTTAASPNLSYSRPYGHLLSYPYTEPANPGDSYLSCQQPAALSQPLCGPAEHPQELEA</original>
    <variation>GGSLSLPPEPLCARCPTKEGAAPRRPGFWGSLETQAATVWRGRHGHFSCRVRLSRGAARYSRRGQGKPGVTISAARLVFKVLSAGPLTHPAGRSRRLPRGHRLKPLSIALSLCLQCPSSVISRPRLSPGPSLSAPPYPKLAPPPVAELRPPTAGAAVPWLWPSARFLPRVTGPIRVGAPLGAELRLVSPGAVNVGVETLHAE</variation>
    <location>
        <begin position="1"/>
        <end position="94"/>
    </location>
</feature>
<feature type="sequence conflict" description="In Ref. 1; AAC50942." evidence="8" ref="1">
    <original>P</original>
    <variation>A</variation>
    <location>
        <position position="113"/>
    </location>
</feature>
<feature type="sequence conflict" description="In Ref. 1; AAC50942." evidence="8" ref="1">
    <original>S</original>
    <variation>Y</variation>
    <location>
        <position position="203"/>
    </location>
</feature>
<feature type="sequence conflict" description="In Ref. 1; AAC50942." evidence="8" ref="1">
    <original>A</original>
    <variation>P</variation>
    <location>
        <position position="224"/>
    </location>
</feature>
<feature type="sequence conflict" description="In Ref. 1; AAC50942." evidence="8" ref="1">
    <location>
        <position position="235"/>
    </location>
</feature>
<feature type="sequence conflict" description="In Ref. 1; AAC50942." evidence="8" ref="1">
    <original>P</original>
    <variation>H</variation>
    <location sequence="Q92988-2">
        <position position="8"/>
    </location>
</feature>
<feature type="sequence conflict" description="In Ref. 1; AAC50942." evidence="8" ref="1">
    <original>Y</original>
    <variation>N</variation>
    <location sequence="Q92988-2">
        <position position="15"/>
    </location>
</feature>
<evidence type="ECO:0000255" key="1">
    <source>
        <dbReference type="PROSITE-ProRule" id="PRU00108"/>
    </source>
</evidence>
<evidence type="ECO:0000256" key="2">
    <source>
        <dbReference type="SAM" id="MobiDB-lite"/>
    </source>
</evidence>
<evidence type="ECO:0000269" key="3">
    <source>
    </source>
</evidence>
<evidence type="ECO:0000269" key="4">
    <source>
    </source>
</evidence>
<evidence type="ECO:0000269" key="5">
    <source>
    </source>
</evidence>
<evidence type="ECO:0000303" key="6">
    <source>
    </source>
</evidence>
<evidence type="ECO:0000303" key="7">
    <source>
    </source>
</evidence>
<evidence type="ECO:0000305" key="8"/>
<protein>
    <recommendedName>
        <fullName>Homeobox protein DLX-4</fullName>
    </recommendedName>
    <alternativeName>
        <fullName>Beta protein 1</fullName>
    </alternativeName>
    <alternativeName>
        <fullName>Homeobox protein DLX-7</fullName>
    </alternativeName>
    <alternativeName>
        <fullName>Homeobox protein DLX-8</fullName>
    </alternativeName>
</protein>
<keyword id="KW-0025">Alternative splicing</keyword>
<keyword id="KW-0217">Developmental protein</keyword>
<keyword id="KW-0238">DNA-binding</keyword>
<keyword id="KW-0371">Homeobox</keyword>
<keyword id="KW-0539">Nucleus</keyword>
<keyword id="KW-1267">Proteomics identification</keyword>
<keyword id="KW-1185">Reference proteome</keyword>
<dbReference type="EMBL" id="U73328">
    <property type="protein sequence ID" value="AAC50942.1"/>
    <property type="molecule type" value="mRNA"/>
</dbReference>
<dbReference type="EMBL" id="AF028235">
    <property type="protein sequence ID" value="AAC14398.1"/>
    <property type="molecule type" value="Genomic_DNA"/>
</dbReference>
<dbReference type="EMBL" id="AF254115">
    <property type="protein sequence ID" value="AAG31975.1"/>
    <property type="molecule type" value="mRNA"/>
</dbReference>
<dbReference type="EMBL" id="AF452638">
    <property type="protein sequence ID" value="AAL99503.1"/>
    <property type="molecule type" value="Genomic_DNA"/>
</dbReference>
<dbReference type="EMBL" id="BT006978">
    <property type="protein sequence ID" value="AAP35624.1"/>
    <property type="molecule type" value="mRNA"/>
</dbReference>
<dbReference type="EMBL" id="CH471109">
    <property type="protein sequence ID" value="EAW94651.1"/>
    <property type="molecule type" value="Genomic_DNA"/>
</dbReference>
<dbReference type="EMBL" id="CH471109">
    <property type="protein sequence ID" value="EAW94653.1"/>
    <property type="molecule type" value="Genomic_DNA"/>
</dbReference>
<dbReference type="EMBL" id="CH471109">
    <property type="protein sequence ID" value="EAW94654.1"/>
    <property type="molecule type" value="Genomic_DNA"/>
</dbReference>
<dbReference type="EMBL" id="CH471109">
    <property type="protein sequence ID" value="EAW94655.1"/>
    <property type="molecule type" value="Genomic_DNA"/>
</dbReference>
<dbReference type="EMBL" id="BC005812">
    <property type="protein sequence ID" value="AAH05812.1"/>
    <property type="molecule type" value="mRNA"/>
</dbReference>
<dbReference type="EMBL" id="BC014419">
    <property type="protein sequence ID" value="AAH14419.1"/>
    <property type="molecule type" value="mRNA"/>
</dbReference>
<dbReference type="EMBL" id="BC016145">
    <property type="protein sequence ID" value="AAH16145.1"/>
    <property type="molecule type" value="mRNA"/>
</dbReference>
<dbReference type="EMBL" id="U31762">
    <property type="protein sequence ID" value="AAC51171.1"/>
    <property type="molecule type" value="mRNA"/>
</dbReference>
<dbReference type="CCDS" id="CCDS11555.1">
    <molecule id="Q92988-1"/>
</dbReference>
<dbReference type="CCDS" id="CCDS45728.1">
    <molecule id="Q92988-2"/>
</dbReference>
<dbReference type="PIR" id="G01958">
    <property type="entry name" value="G01958"/>
</dbReference>
<dbReference type="RefSeq" id="NP_001925.2">
    <molecule id="Q92988-2"/>
    <property type="nucleotide sequence ID" value="NM_001934.3"/>
</dbReference>
<dbReference type="RefSeq" id="NP_612138.1">
    <molecule id="Q92988-1"/>
    <property type="nucleotide sequence ID" value="NM_138281.3"/>
</dbReference>
<dbReference type="RefSeq" id="XP_016879780.1">
    <property type="nucleotide sequence ID" value="XM_017024291.1"/>
</dbReference>
<dbReference type="RefSeq" id="XP_047291473.1">
    <molecule id="Q92988-2"/>
    <property type="nucleotide sequence ID" value="XM_047435517.1"/>
</dbReference>
<dbReference type="RefSeq" id="XP_054171274.1">
    <molecule id="Q92988-2"/>
    <property type="nucleotide sequence ID" value="XM_054315299.1"/>
</dbReference>
<dbReference type="SMR" id="Q92988"/>
<dbReference type="BioGRID" id="108092">
    <property type="interactions" value="9"/>
</dbReference>
<dbReference type="FunCoup" id="Q92988">
    <property type="interactions" value="804"/>
</dbReference>
<dbReference type="IntAct" id="Q92988">
    <property type="interactions" value="15"/>
</dbReference>
<dbReference type="MINT" id="Q92988"/>
<dbReference type="STRING" id="9606.ENSP00000240306"/>
<dbReference type="iPTMnet" id="Q92988"/>
<dbReference type="PhosphoSitePlus" id="Q92988"/>
<dbReference type="BioMuta" id="DLX4"/>
<dbReference type="DMDM" id="85700416"/>
<dbReference type="jPOST" id="Q92988"/>
<dbReference type="MassIVE" id="Q92988"/>
<dbReference type="PaxDb" id="9606-ENSP00000240306"/>
<dbReference type="PeptideAtlas" id="Q92988"/>
<dbReference type="Antibodypedia" id="17993">
    <property type="antibodies" value="430 antibodies from 32 providers"/>
</dbReference>
<dbReference type="DNASU" id="1748"/>
<dbReference type="Ensembl" id="ENST00000240306.5">
    <molecule id="Q92988-1"/>
    <property type="protein sequence ID" value="ENSP00000240306.3"/>
    <property type="gene ID" value="ENSG00000108813.12"/>
</dbReference>
<dbReference type="Ensembl" id="ENST00000411890.3">
    <molecule id="Q92988-2"/>
    <property type="protein sequence ID" value="ENSP00000410622.2"/>
    <property type="gene ID" value="ENSG00000108813.12"/>
</dbReference>
<dbReference type="Ensembl" id="ENST00000611342.1">
    <molecule id="Q92988-3"/>
    <property type="protein sequence ID" value="ENSP00000480366.1"/>
    <property type="gene ID" value="ENSG00000108813.12"/>
</dbReference>
<dbReference type="GeneID" id="1748"/>
<dbReference type="KEGG" id="hsa:1748"/>
<dbReference type="MANE-Select" id="ENST00000240306.5">
    <property type="protein sequence ID" value="ENSP00000240306.3"/>
    <property type="RefSeq nucleotide sequence ID" value="NM_138281.3"/>
    <property type="RefSeq protein sequence ID" value="NP_612138.1"/>
</dbReference>
<dbReference type="UCSC" id="uc002ipv.4">
    <molecule id="Q92988-1"/>
    <property type="organism name" value="human"/>
</dbReference>
<dbReference type="AGR" id="HGNC:2917"/>
<dbReference type="CTD" id="1748"/>
<dbReference type="DisGeNET" id="1748"/>
<dbReference type="GeneCards" id="DLX4"/>
<dbReference type="HGNC" id="HGNC:2917">
    <property type="gene designation" value="DLX4"/>
</dbReference>
<dbReference type="HPA" id="ENSG00000108813">
    <property type="expression patterns" value="Tissue enhanced (placenta, skin)"/>
</dbReference>
<dbReference type="MalaCards" id="DLX4"/>
<dbReference type="MIM" id="601911">
    <property type="type" value="gene"/>
</dbReference>
<dbReference type="MIM" id="616788">
    <property type="type" value="phenotype"/>
</dbReference>
<dbReference type="neXtProt" id="NX_Q92988"/>
<dbReference type="OpenTargets" id="ENSG00000108813"/>
<dbReference type="Orphanet" id="199306">
    <property type="disease" value="Cleft lip/palate"/>
</dbReference>
<dbReference type="PharmGKB" id="PA27372"/>
<dbReference type="VEuPathDB" id="HostDB:ENSG00000108813"/>
<dbReference type="eggNOG" id="KOG0850">
    <property type="taxonomic scope" value="Eukaryota"/>
</dbReference>
<dbReference type="GeneTree" id="ENSGT00940000162259"/>
<dbReference type="HOGENOM" id="CLU_074733_2_1_1"/>
<dbReference type="InParanoid" id="Q92988"/>
<dbReference type="OMA" id="GNNFGAW"/>
<dbReference type="OrthoDB" id="9834564at2759"/>
<dbReference type="PAN-GO" id="Q92988">
    <property type="GO annotations" value="5 GO annotations based on evolutionary models"/>
</dbReference>
<dbReference type="PhylomeDB" id="Q92988"/>
<dbReference type="TreeFam" id="TF315720"/>
<dbReference type="PathwayCommons" id="Q92988"/>
<dbReference type="SignaLink" id="Q92988"/>
<dbReference type="BioGRID-ORCS" id="1748">
    <property type="hits" value="18 hits in 1169 CRISPR screens"/>
</dbReference>
<dbReference type="GeneWiki" id="DLX4"/>
<dbReference type="GenomeRNAi" id="1748"/>
<dbReference type="Pharos" id="Q92988">
    <property type="development level" value="Tbio"/>
</dbReference>
<dbReference type="PRO" id="PR:Q92988"/>
<dbReference type="Proteomes" id="UP000005640">
    <property type="component" value="Chromosome 17"/>
</dbReference>
<dbReference type="RNAct" id="Q92988">
    <property type="molecule type" value="protein"/>
</dbReference>
<dbReference type="Bgee" id="ENSG00000108813">
    <property type="expression patterns" value="Expressed in buccal mucosa cell and 130 other cell types or tissues"/>
</dbReference>
<dbReference type="GO" id="GO:0000785">
    <property type="term" value="C:chromatin"/>
    <property type="evidence" value="ECO:0000247"/>
    <property type="project" value="NTNU_SB"/>
</dbReference>
<dbReference type="GO" id="GO:0005654">
    <property type="term" value="C:nucleoplasm"/>
    <property type="evidence" value="ECO:0000314"/>
    <property type="project" value="HPA"/>
</dbReference>
<dbReference type="GO" id="GO:0005634">
    <property type="term" value="C:nucleus"/>
    <property type="evidence" value="ECO:0000303"/>
    <property type="project" value="UniProtKB"/>
</dbReference>
<dbReference type="GO" id="GO:0003700">
    <property type="term" value="F:DNA-binding transcription factor activity"/>
    <property type="evidence" value="ECO:0000304"/>
    <property type="project" value="ProtInc"/>
</dbReference>
<dbReference type="GO" id="GO:0000981">
    <property type="term" value="F:DNA-binding transcription factor activity, RNA polymerase II-specific"/>
    <property type="evidence" value="ECO:0000247"/>
    <property type="project" value="NTNU_SB"/>
</dbReference>
<dbReference type="GO" id="GO:0001227">
    <property type="term" value="F:DNA-binding transcription repressor activity, RNA polymerase II-specific"/>
    <property type="evidence" value="ECO:0000314"/>
    <property type="project" value="NTNU_SB"/>
</dbReference>
<dbReference type="GO" id="GO:0000978">
    <property type="term" value="F:RNA polymerase II cis-regulatory region sequence-specific DNA binding"/>
    <property type="evidence" value="ECO:0000314"/>
    <property type="project" value="NTNU_SB"/>
</dbReference>
<dbReference type="GO" id="GO:0043565">
    <property type="term" value="F:sequence-specific DNA binding"/>
    <property type="evidence" value="ECO:0000314"/>
    <property type="project" value="MGI"/>
</dbReference>
<dbReference type="GO" id="GO:1990837">
    <property type="term" value="F:sequence-specific double-stranded DNA binding"/>
    <property type="evidence" value="ECO:0000314"/>
    <property type="project" value="ARUK-UCL"/>
</dbReference>
<dbReference type="GO" id="GO:0030154">
    <property type="term" value="P:cell differentiation"/>
    <property type="evidence" value="ECO:0000318"/>
    <property type="project" value="GO_Central"/>
</dbReference>
<dbReference type="GO" id="GO:0048706">
    <property type="term" value="P:embryonic skeletal system development"/>
    <property type="evidence" value="ECO:0000318"/>
    <property type="project" value="GO_Central"/>
</dbReference>
<dbReference type="GO" id="GO:0000122">
    <property type="term" value="P:negative regulation of transcription by RNA polymerase II"/>
    <property type="evidence" value="ECO:0000314"/>
    <property type="project" value="NTNU_SB"/>
</dbReference>
<dbReference type="GO" id="GO:0006355">
    <property type="term" value="P:regulation of DNA-templated transcription"/>
    <property type="evidence" value="ECO:0000303"/>
    <property type="project" value="UniProtKB"/>
</dbReference>
<dbReference type="GO" id="GO:0006357">
    <property type="term" value="P:regulation of transcription by RNA polymerase II"/>
    <property type="evidence" value="ECO:0000318"/>
    <property type="project" value="GO_Central"/>
</dbReference>
<dbReference type="CDD" id="cd00086">
    <property type="entry name" value="homeodomain"/>
    <property type="match status" value="1"/>
</dbReference>
<dbReference type="FunFam" id="1.10.10.60:FF:000295">
    <property type="entry name" value="Distal-less homeobox 4"/>
    <property type="match status" value="1"/>
</dbReference>
<dbReference type="Gene3D" id="1.10.10.60">
    <property type="entry name" value="Homeodomain-like"/>
    <property type="match status" value="1"/>
</dbReference>
<dbReference type="InterPro" id="IPR050460">
    <property type="entry name" value="Distal-less_Homeobox_TF"/>
</dbReference>
<dbReference type="InterPro" id="IPR001356">
    <property type="entry name" value="HD"/>
</dbReference>
<dbReference type="InterPro" id="IPR020479">
    <property type="entry name" value="HD_metazoa"/>
</dbReference>
<dbReference type="InterPro" id="IPR017970">
    <property type="entry name" value="Homeobox_CS"/>
</dbReference>
<dbReference type="InterPro" id="IPR009057">
    <property type="entry name" value="Homeodomain-like_sf"/>
</dbReference>
<dbReference type="InterPro" id="IPR000047">
    <property type="entry name" value="HTH_motif"/>
</dbReference>
<dbReference type="PANTHER" id="PTHR24327">
    <property type="entry name" value="HOMEOBOX PROTEIN"/>
    <property type="match status" value="1"/>
</dbReference>
<dbReference type="PANTHER" id="PTHR24327:SF21">
    <property type="entry name" value="HOMEOBOX PROTEIN DLX-4"/>
    <property type="match status" value="1"/>
</dbReference>
<dbReference type="Pfam" id="PF00046">
    <property type="entry name" value="Homeodomain"/>
    <property type="match status" value="1"/>
</dbReference>
<dbReference type="PRINTS" id="PR00024">
    <property type="entry name" value="HOMEOBOX"/>
</dbReference>
<dbReference type="PRINTS" id="PR00031">
    <property type="entry name" value="HTHREPRESSR"/>
</dbReference>
<dbReference type="SMART" id="SM00389">
    <property type="entry name" value="HOX"/>
    <property type="match status" value="1"/>
</dbReference>
<dbReference type="SUPFAM" id="SSF46689">
    <property type="entry name" value="Homeodomain-like"/>
    <property type="match status" value="1"/>
</dbReference>
<dbReference type="PROSITE" id="PS00027">
    <property type="entry name" value="HOMEOBOX_1"/>
    <property type="match status" value="1"/>
</dbReference>
<dbReference type="PROSITE" id="PS50071">
    <property type="entry name" value="HOMEOBOX_2"/>
    <property type="match status" value="1"/>
</dbReference>